<gene>
    <name evidence="1" type="primary">murC</name>
    <name type="ordered locus">ECUMN_0091</name>
</gene>
<sequence>MNTQQLAKLRSIVPEMRRVRHIHFVGIGGAGMGGIAEVLANEGYQISGSDLAPNPVTQQLMNLGATIYFNHRPENVRDASVVVVSSAISADNPEIVAAHEARIPVIRRAEMLAELMRFRHGIAIAGTHGKTTTTAMVSSIYAEAGLDPTFVNGGLVKAAGVHARLGHGRYLIAEADESDASFLHLQPMVAIVTNIEADHMDTYQGDFENLKQTFINFLHNLPFYGRAVMCVDDPVIRELLPRVGRQTTTYGFSEDADVRVEDYQQIGPQGHFTLLRQDKEPMRVTLNAPGRHNALNAAAAVAVATEEGIDDEAILRALESFQGTGRRFDFLGEFPLEPVNGKSGTAMLVDDYGHHPTEVDATIKAARAGWPDKNLVMLFQPHRFTRTRDLYDDFANVLTQVDTLLMLEVYPAGEAPIPGADSRSLCRTIRGRGKIDPILVPDPAQVAEMLAPVLTGNDLILVQGAGNIGKIARSLAEIKLKPQTPEEAQHD</sequence>
<proteinExistence type="inferred from homology"/>
<protein>
    <recommendedName>
        <fullName evidence="1">UDP-N-acetylmuramate--L-alanine ligase</fullName>
        <ecNumber evidence="1">6.3.2.8</ecNumber>
    </recommendedName>
    <alternativeName>
        <fullName evidence="1">UDP-N-acetylmuramoyl-L-alanine synthetase</fullName>
    </alternativeName>
</protein>
<comment type="function">
    <text evidence="1">Cell wall formation.</text>
</comment>
<comment type="catalytic activity">
    <reaction evidence="1">
        <text>UDP-N-acetyl-alpha-D-muramate + L-alanine + ATP = UDP-N-acetyl-alpha-D-muramoyl-L-alanine + ADP + phosphate + H(+)</text>
        <dbReference type="Rhea" id="RHEA:23372"/>
        <dbReference type="ChEBI" id="CHEBI:15378"/>
        <dbReference type="ChEBI" id="CHEBI:30616"/>
        <dbReference type="ChEBI" id="CHEBI:43474"/>
        <dbReference type="ChEBI" id="CHEBI:57972"/>
        <dbReference type="ChEBI" id="CHEBI:70757"/>
        <dbReference type="ChEBI" id="CHEBI:83898"/>
        <dbReference type="ChEBI" id="CHEBI:456216"/>
        <dbReference type="EC" id="6.3.2.8"/>
    </reaction>
</comment>
<comment type="pathway">
    <text evidence="1">Cell wall biogenesis; peptidoglycan biosynthesis.</text>
</comment>
<comment type="subcellular location">
    <subcellularLocation>
        <location evidence="1">Cytoplasm</location>
    </subcellularLocation>
</comment>
<comment type="similarity">
    <text evidence="1">Belongs to the MurCDEF family.</text>
</comment>
<reference key="1">
    <citation type="journal article" date="2009" name="PLoS Genet.">
        <title>Organised genome dynamics in the Escherichia coli species results in highly diverse adaptive paths.</title>
        <authorList>
            <person name="Touchon M."/>
            <person name="Hoede C."/>
            <person name="Tenaillon O."/>
            <person name="Barbe V."/>
            <person name="Baeriswyl S."/>
            <person name="Bidet P."/>
            <person name="Bingen E."/>
            <person name="Bonacorsi S."/>
            <person name="Bouchier C."/>
            <person name="Bouvet O."/>
            <person name="Calteau A."/>
            <person name="Chiapello H."/>
            <person name="Clermont O."/>
            <person name="Cruveiller S."/>
            <person name="Danchin A."/>
            <person name="Diard M."/>
            <person name="Dossat C."/>
            <person name="Karoui M.E."/>
            <person name="Frapy E."/>
            <person name="Garry L."/>
            <person name="Ghigo J.M."/>
            <person name="Gilles A.M."/>
            <person name="Johnson J."/>
            <person name="Le Bouguenec C."/>
            <person name="Lescat M."/>
            <person name="Mangenot S."/>
            <person name="Martinez-Jehanne V."/>
            <person name="Matic I."/>
            <person name="Nassif X."/>
            <person name="Oztas S."/>
            <person name="Petit M.A."/>
            <person name="Pichon C."/>
            <person name="Rouy Z."/>
            <person name="Ruf C.S."/>
            <person name="Schneider D."/>
            <person name="Tourret J."/>
            <person name="Vacherie B."/>
            <person name="Vallenet D."/>
            <person name="Medigue C."/>
            <person name="Rocha E.P.C."/>
            <person name="Denamur E."/>
        </authorList>
    </citation>
    <scope>NUCLEOTIDE SEQUENCE [LARGE SCALE GENOMIC DNA]</scope>
    <source>
        <strain>UMN026 / ExPEC</strain>
    </source>
</reference>
<organism>
    <name type="scientific">Escherichia coli O17:K52:H18 (strain UMN026 / ExPEC)</name>
    <dbReference type="NCBI Taxonomy" id="585056"/>
    <lineage>
        <taxon>Bacteria</taxon>
        <taxon>Pseudomonadati</taxon>
        <taxon>Pseudomonadota</taxon>
        <taxon>Gammaproteobacteria</taxon>
        <taxon>Enterobacterales</taxon>
        <taxon>Enterobacteriaceae</taxon>
        <taxon>Escherichia</taxon>
    </lineage>
</organism>
<dbReference type="EC" id="6.3.2.8" evidence="1"/>
<dbReference type="EMBL" id="CU928163">
    <property type="protein sequence ID" value="CAR11314.1"/>
    <property type="molecule type" value="Genomic_DNA"/>
</dbReference>
<dbReference type="RefSeq" id="WP_001096047.1">
    <property type="nucleotide sequence ID" value="NC_011751.1"/>
</dbReference>
<dbReference type="RefSeq" id="YP_002410870.1">
    <property type="nucleotide sequence ID" value="NC_011751.1"/>
</dbReference>
<dbReference type="SMR" id="B7N7W4"/>
<dbReference type="STRING" id="585056.ECUMN_0091"/>
<dbReference type="KEGG" id="eum:ECUMN_0091"/>
<dbReference type="PATRIC" id="fig|585056.7.peg.282"/>
<dbReference type="HOGENOM" id="CLU_028104_2_2_6"/>
<dbReference type="UniPathway" id="UPA00219"/>
<dbReference type="Proteomes" id="UP000007097">
    <property type="component" value="Chromosome"/>
</dbReference>
<dbReference type="GO" id="GO:0005737">
    <property type="term" value="C:cytoplasm"/>
    <property type="evidence" value="ECO:0007669"/>
    <property type="project" value="UniProtKB-SubCell"/>
</dbReference>
<dbReference type="GO" id="GO:0005524">
    <property type="term" value="F:ATP binding"/>
    <property type="evidence" value="ECO:0007669"/>
    <property type="project" value="UniProtKB-UniRule"/>
</dbReference>
<dbReference type="GO" id="GO:0008763">
    <property type="term" value="F:UDP-N-acetylmuramate-L-alanine ligase activity"/>
    <property type="evidence" value="ECO:0007669"/>
    <property type="project" value="UniProtKB-UniRule"/>
</dbReference>
<dbReference type="GO" id="GO:0051301">
    <property type="term" value="P:cell division"/>
    <property type="evidence" value="ECO:0007669"/>
    <property type="project" value="UniProtKB-KW"/>
</dbReference>
<dbReference type="GO" id="GO:0071555">
    <property type="term" value="P:cell wall organization"/>
    <property type="evidence" value="ECO:0007669"/>
    <property type="project" value="UniProtKB-KW"/>
</dbReference>
<dbReference type="GO" id="GO:0009252">
    <property type="term" value="P:peptidoglycan biosynthetic process"/>
    <property type="evidence" value="ECO:0007669"/>
    <property type="project" value="UniProtKB-UniRule"/>
</dbReference>
<dbReference type="GO" id="GO:0008360">
    <property type="term" value="P:regulation of cell shape"/>
    <property type="evidence" value="ECO:0007669"/>
    <property type="project" value="UniProtKB-KW"/>
</dbReference>
<dbReference type="FunFam" id="3.40.1190.10:FF:000001">
    <property type="entry name" value="UDP-N-acetylmuramate--L-alanine ligase"/>
    <property type="match status" value="1"/>
</dbReference>
<dbReference type="FunFam" id="3.40.50.720:FF:000046">
    <property type="entry name" value="UDP-N-acetylmuramate--L-alanine ligase"/>
    <property type="match status" value="1"/>
</dbReference>
<dbReference type="FunFam" id="3.90.190.20:FF:000001">
    <property type="entry name" value="UDP-N-acetylmuramate--L-alanine ligase"/>
    <property type="match status" value="1"/>
</dbReference>
<dbReference type="Gene3D" id="3.90.190.20">
    <property type="entry name" value="Mur ligase, C-terminal domain"/>
    <property type="match status" value="1"/>
</dbReference>
<dbReference type="Gene3D" id="3.40.1190.10">
    <property type="entry name" value="Mur-like, catalytic domain"/>
    <property type="match status" value="1"/>
</dbReference>
<dbReference type="Gene3D" id="3.40.50.720">
    <property type="entry name" value="NAD(P)-binding Rossmann-like Domain"/>
    <property type="match status" value="1"/>
</dbReference>
<dbReference type="HAMAP" id="MF_00046">
    <property type="entry name" value="MurC"/>
    <property type="match status" value="1"/>
</dbReference>
<dbReference type="InterPro" id="IPR036565">
    <property type="entry name" value="Mur-like_cat_sf"/>
</dbReference>
<dbReference type="InterPro" id="IPR004101">
    <property type="entry name" value="Mur_ligase_C"/>
</dbReference>
<dbReference type="InterPro" id="IPR036615">
    <property type="entry name" value="Mur_ligase_C_dom_sf"/>
</dbReference>
<dbReference type="InterPro" id="IPR013221">
    <property type="entry name" value="Mur_ligase_cen"/>
</dbReference>
<dbReference type="InterPro" id="IPR000713">
    <property type="entry name" value="Mur_ligase_N"/>
</dbReference>
<dbReference type="InterPro" id="IPR050061">
    <property type="entry name" value="MurCDEF_pg_biosynth"/>
</dbReference>
<dbReference type="InterPro" id="IPR005758">
    <property type="entry name" value="UDP-N-AcMur_Ala_ligase_MurC"/>
</dbReference>
<dbReference type="NCBIfam" id="TIGR01082">
    <property type="entry name" value="murC"/>
    <property type="match status" value="1"/>
</dbReference>
<dbReference type="PANTHER" id="PTHR43445:SF3">
    <property type="entry name" value="UDP-N-ACETYLMURAMATE--L-ALANINE LIGASE"/>
    <property type="match status" value="1"/>
</dbReference>
<dbReference type="PANTHER" id="PTHR43445">
    <property type="entry name" value="UDP-N-ACETYLMURAMATE--L-ALANINE LIGASE-RELATED"/>
    <property type="match status" value="1"/>
</dbReference>
<dbReference type="Pfam" id="PF01225">
    <property type="entry name" value="Mur_ligase"/>
    <property type="match status" value="1"/>
</dbReference>
<dbReference type="Pfam" id="PF02875">
    <property type="entry name" value="Mur_ligase_C"/>
    <property type="match status" value="1"/>
</dbReference>
<dbReference type="Pfam" id="PF08245">
    <property type="entry name" value="Mur_ligase_M"/>
    <property type="match status" value="1"/>
</dbReference>
<dbReference type="SUPFAM" id="SSF51984">
    <property type="entry name" value="MurCD N-terminal domain"/>
    <property type="match status" value="1"/>
</dbReference>
<dbReference type="SUPFAM" id="SSF53623">
    <property type="entry name" value="MurD-like peptide ligases, catalytic domain"/>
    <property type="match status" value="1"/>
</dbReference>
<dbReference type="SUPFAM" id="SSF53244">
    <property type="entry name" value="MurD-like peptide ligases, peptide-binding domain"/>
    <property type="match status" value="1"/>
</dbReference>
<name>MURC_ECOLU</name>
<keyword id="KW-0067">ATP-binding</keyword>
<keyword id="KW-0131">Cell cycle</keyword>
<keyword id="KW-0132">Cell division</keyword>
<keyword id="KW-0133">Cell shape</keyword>
<keyword id="KW-0961">Cell wall biogenesis/degradation</keyword>
<keyword id="KW-0963">Cytoplasm</keyword>
<keyword id="KW-0436">Ligase</keyword>
<keyword id="KW-0547">Nucleotide-binding</keyword>
<keyword id="KW-0573">Peptidoglycan synthesis</keyword>
<accession>B7N7W4</accession>
<evidence type="ECO:0000255" key="1">
    <source>
        <dbReference type="HAMAP-Rule" id="MF_00046"/>
    </source>
</evidence>
<feature type="chain" id="PRO_1000116624" description="UDP-N-acetylmuramate--L-alanine ligase">
    <location>
        <begin position="1"/>
        <end position="491"/>
    </location>
</feature>
<feature type="binding site" evidence="1">
    <location>
        <begin position="126"/>
        <end position="132"/>
    </location>
    <ligand>
        <name>ATP</name>
        <dbReference type="ChEBI" id="CHEBI:30616"/>
    </ligand>
</feature>